<organism>
    <name type="scientific">Pseudomonas putida (strain GB-1)</name>
    <dbReference type="NCBI Taxonomy" id="76869"/>
    <lineage>
        <taxon>Bacteria</taxon>
        <taxon>Pseudomonadati</taxon>
        <taxon>Pseudomonadota</taxon>
        <taxon>Gammaproteobacteria</taxon>
        <taxon>Pseudomonadales</taxon>
        <taxon>Pseudomonadaceae</taxon>
        <taxon>Pseudomonas</taxon>
    </lineage>
</organism>
<proteinExistence type="inferred from homology"/>
<feature type="chain" id="PRO_1000075509" description="Peptide chain release factor 1">
    <location>
        <begin position="1"/>
        <end position="360"/>
    </location>
</feature>
<feature type="modified residue" description="N5-methylglutamine" evidence="1">
    <location>
        <position position="237"/>
    </location>
</feature>
<dbReference type="EMBL" id="CP000926">
    <property type="protein sequence ID" value="ABY96684.1"/>
    <property type="molecule type" value="Genomic_DNA"/>
</dbReference>
<dbReference type="RefSeq" id="WP_012270485.1">
    <property type="nucleotide sequence ID" value="NC_010322.1"/>
</dbReference>
<dbReference type="SMR" id="B0KNE4"/>
<dbReference type="KEGG" id="ppg:PputGB1_0774"/>
<dbReference type="eggNOG" id="COG0216">
    <property type="taxonomic scope" value="Bacteria"/>
</dbReference>
<dbReference type="HOGENOM" id="CLU_036856_0_1_6"/>
<dbReference type="Proteomes" id="UP000002157">
    <property type="component" value="Chromosome"/>
</dbReference>
<dbReference type="GO" id="GO:0005737">
    <property type="term" value="C:cytoplasm"/>
    <property type="evidence" value="ECO:0007669"/>
    <property type="project" value="UniProtKB-SubCell"/>
</dbReference>
<dbReference type="GO" id="GO:0016149">
    <property type="term" value="F:translation release factor activity, codon specific"/>
    <property type="evidence" value="ECO:0007669"/>
    <property type="project" value="UniProtKB-UniRule"/>
</dbReference>
<dbReference type="FunFam" id="3.30.160.20:FF:000004">
    <property type="entry name" value="Peptide chain release factor 1"/>
    <property type="match status" value="1"/>
</dbReference>
<dbReference type="FunFam" id="3.30.70.1660:FF:000002">
    <property type="entry name" value="Peptide chain release factor 1"/>
    <property type="match status" value="1"/>
</dbReference>
<dbReference type="FunFam" id="3.30.70.1660:FF:000004">
    <property type="entry name" value="Peptide chain release factor 1"/>
    <property type="match status" value="1"/>
</dbReference>
<dbReference type="Gene3D" id="3.30.160.20">
    <property type="match status" value="1"/>
</dbReference>
<dbReference type="Gene3D" id="3.30.70.1660">
    <property type="match status" value="1"/>
</dbReference>
<dbReference type="Gene3D" id="6.10.140.1950">
    <property type="match status" value="1"/>
</dbReference>
<dbReference type="HAMAP" id="MF_00093">
    <property type="entry name" value="Rel_fac_1"/>
    <property type="match status" value="1"/>
</dbReference>
<dbReference type="InterPro" id="IPR005139">
    <property type="entry name" value="PCRF"/>
</dbReference>
<dbReference type="InterPro" id="IPR000352">
    <property type="entry name" value="Pep_chain_release_fac_I"/>
</dbReference>
<dbReference type="InterPro" id="IPR045853">
    <property type="entry name" value="Pep_chain_release_fac_I_sf"/>
</dbReference>
<dbReference type="InterPro" id="IPR050057">
    <property type="entry name" value="Prokaryotic/Mito_RF"/>
</dbReference>
<dbReference type="InterPro" id="IPR004373">
    <property type="entry name" value="RF-1"/>
</dbReference>
<dbReference type="NCBIfam" id="TIGR00019">
    <property type="entry name" value="prfA"/>
    <property type="match status" value="1"/>
</dbReference>
<dbReference type="NCBIfam" id="NF001859">
    <property type="entry name" value="PRK00591.1"/>
    <property type="match status" value="1"/>
</dbReference>
<dbReference type="PANTHER" id="PTHR43804">
    <property type="entry name" value="LD18447P"/>
    <property type="match status" value="1"/>
</dbReference>
<dbReference type="PANTHER" id="PTHR43804:SF7">
    <property type="entry name" value="LD18447P"/>
    <property type="match status" value="1"/>
</dbReference>
<dbReference type="Pfam" id="PF03462">
    <property type="entry name" value="PCRF"/>
    <property type="match status" value="1"/>
</dbReference>
<dbReference type="Pfam" id="PF00472">
    <property type="entry name" value="RF-1"/>
    <property type="match status" value="1"/>
</dbReference>
<dbReference type="SMART" id="SM00937">
    <property type="entry name" value="PCRF"/>
    <property type="match status" value="1"/>
</dbReference>
<dbReference type="SUPFAM" id="SSF75620">
    <property type="entry name" value="Release factor"/>
    <property type="match status" value="1"/>
</dbReference>
<dbReference type="PROSITE" id="PS00745">
    <property type="entry name" value="RF_PROK_I"/>
    <property type="match status" value="1"/>
</dbReference>
<accession>B0KNE4</accession>
<sequence length="360" mass="40224">MKASLLNKLDILQDRFEELTALLGDAEVISDQTRFRAYSREYAEVEPVYAAYKEWCKVQGDLEGAQALLKDSDPDLREMAVEEVREAKEQLLTLESQLQRMLLPKDPNDGRNVFLEIRAGTGGDEAAIFSGDLFRMYSRYAEKRGWRLEILSENEGEHGGYKEIIARVEGENVYGKLKFESGAHRVQRVPETESQGRVHTSACTVAVLPEPDEQAAIEINPADLRVDTYRASGAGGQHVNKTDSAIRITHLPTGIVVECQEERSQHKNRARAMSWLSAKLNDMQTSAAQNAIASERKLLVGSGDRSERIRTYNYPQGRVTDHRINLTLYSLDDILSGGVEAVIEPLLAEYQADQLAALGD</sequence>
<protein>
    <recommendedName>
        <fullName evidence="1">Peptide chain release factor 1</fullName>
        <shortName evidence="1">RF-1</shortName>
    </recommendedName>
</protein>
<comment type="function">
    <text evidence="1">Peptide chain release factor 1 directs the termination of translation in response to the peptide chain termination codons UAG and UAA.</text>
</comment>
<comment type="subcellular location">
    <subcellularLocation>
        <location evidence="1">Cytoplasm</location>
    </subcellularLocation>
</comment>
<comment type="PTM">
    <text evidence="1">Methylated by PrmC. Methylation increases the termination efficiency of RF1.</text>
</comment>
<comment type="similarity">
    <text evidence="1">Belongs to the prokaryotic/mitochondrial release factor family.</text>
</comment>
<reference key="1">
    <citation type="submission" date="2008-01" db="EMBL/GenBank/DDBJ databases">
        <title>Complete sequence of Pseudomonas putida GB-1.</title>
        <authorList>
            <consortium name="US DOE Joint Genome Institute"/>
            <person name="Copeland A."/>
            <person name="Lucas S."/>
            <person name="Lapidus A."/>
            <person name="Barry K."/>
            <person name="Glavina del Rio T."/>
            <person name="Dalin E."/>
            <person name="Tice H."/>
            <person name="Pitluck S."/>
            <person name="Bruce D."/>
            <person name="Goodwin L."/>
            <person name="Chertkov O."/>
            <person name="Brettin T."/>
            <person name="Detter J.C."/>
            <person name="Han C."/>
            <person name="Kuske C.R."/>
            <person name="Schmutz J."/>
            <person name="Larimer F."/>
            <person name="Land M."/>
            <person name="Hauser L."/>
            <person name="Kyrpides N."/>
            <person name="Kim E."/>
            <person name="McCarthy J.K."/>
            <person name="Richardson P."/>
        </authorList>
    </citation>
    <scope>NUCLEOTIDE SEQUENCE [LARGE SCALE GENOMIC DNA]</scope>
    <source>
        <strain>GB-1</strain>
    </source>
</reference>
<evidence type="ECO:0000255" key="1">
    <source>
        <dbReference type="HAMAP-Rule" id="MF_00093"/>
    </source>
</evidence>
<keyword id="KW-0963">Cytoplasm</keyword>
<keyword id="KW-0488">Methylation</keyword>
<keyword id="KW-0648">Protein biosynthesis</keyword>
<name>RF1_PSEPG</name>
<gene>
    <name evidence="1" type="primary">prfA</name>
    <name type="ordered locus">PputGB1_0774</name>
</gene>